<proteinExistence type="evidence at protein level"/>
<comment type="function">
    <text evidence="3 6">Trans-enoyl reductase; part of the gene cluster that mediates the biosynthesis of pyrrocidines, fungal natural products containing a macrocyclic para-cyclophane connected to a decahydrofluorene ring system that show potent antibiotic activities toward Gram-negative bacteria (PubMed:33834778). Within the pathway, the PKS-NRPS pydA, with the help of the trans-enoyl reductase pydC, synthesize the polyketide-tyrosyl acyl thioester product which can be reductively off-loaded by the terminal reductase (R) domain in pydA (PubMed:33834778). The PKS module of pydA acts in combination with the trans-acting enoyl reductase pydC to produce a methylated polyketide attached to the ACP domain (PubMed:33834778). In parallel, the adenylation (A) domain of the NRPS module activated L-tyrosine, which is then transferred to the ACP domain. The condensation (C) domain subsequently link this group to the polyketide chain, forming an enzyme-bound amide (PubMed:33834778). The alpha/beta hydrolase pydG is then required to catalyze the subsequent Knoevenagel condensation that affords the 3-pyrrolin-2-one ring, whereas the four proteins pydB, pydE, pydX and pydZ then function synergistically to form the cyclophane. PydB and the membrane-bound pydX and pydZ are lipid-binding proteins that can sequester and mold the pdyG product into the inverse S-shape. Binding of the medium chain reductase pydE to the complex would trigger the cascade oxidative cyclization. PydY is involved in the Diels-Alder cycloaddition that forms the decahydrofluorene core. Additional non-enzymatic hydroxylation yields pyrrocidine A2 which can be further reduced into pyrrocidine B by an endogenous reductase (Probable).</text>
</comment>
<comment type="pathway">
    <text evidence="3">Mycotoxin biosynthesis.</text>
</comment>
<comment type="subunit">
    <text evidence="1">Monomer.</text>
</comment>
<comment type="similarity">
    <text evidence="5">Belongs to the zinc-containing alcohol dehydrogenase family.</text>
</comment>
<feature type="chain" id="PRO_0000458424" description="Trans-enoyl reductase pydC">
    <location>
        <begin position="1"/>
        <end position="354"/>
    </location>
</feature>
<feature type="domain" description="Enoyl reductase (ER)" evidence="2">
    <location>
        <begin position="16"/>
        <end position="342"/>
    </location>
</feature>
<feature type="binding site" evidence="1">
    <location>
        <begin position="51"/>
        <end position="54"/>
    </location>
    <ligand>
        <name>NADP(+)</name>
        <dbReference type="ChEBI" id="CHEBI:58349"/>
    </ligand>
</feature>
<feature type="binding site" evidence="1">
    <location>
        <begin position="180"/>
        <end position="183"/>
    </location>
    <ligand>
        <name>NADP(+)</name>
        <dbReference type="ChEBI" id="CHEBI:58349"/>
    </ligand>
</feature>
<feature type="binding site" evidence="1">
    <location>
        <position position="198"/>
    </location>
    <ligand>
        <name>NADP(+)</name>
        <dbReference type="ChEBI" id="CHEBI:58349"/>
    </ligand>
</feature>
<feature type="binding site" evidence="1">
    <location>
        <begin position="245"/>
        <end position="246"/>
    </location>
    <ligand>
        <name>NADP(+)</name>
        <dbReference type="ChEBI" id="CHEBI:58349"/>
    </ligand>
</feature>
<feature type="binding site" evidence="1">
    <location>
        <begin position="336"/>
        <end position="337"/>
    </location>
    <ligand>
        <name>NADP(+)</name>
        <dbReference type="ChEBI" id="CHEBI:58349"/>
    </ligand>
</feature>
<accession>A0A8F4S717</accession>
<gene>
    <name evidence="4" type="primary">pydC</name>
</gene>
<evidence type="ECO:0000250" key="1">
    <source>
        <dbReference type="UniProtKB" id="Q9Y7D0"/>
    </source>
</evidence>
<evidence type="ECO:0000255" key="2"/>
<evidence type="ECO:0000269" key="3">
    <source>
    </source>
</evidence>
<evidence type="ECO:0000303" key="4">
    <source>
    </source>
</evidence>
<evidence type="ECO:0000305" key="5"/>
<evidence type="ECO:0000305" key="6">
    <source>
    </source>
</evidence>
<organism>
    <name type="scientific">Acremonium sp</name>
    <dbReference type="NCBI Taxonomy" id="2046025"/>
    <lineage>
        <taxon>Eukaryota</taxon>
        <taxon>Fungi</taxon>
        <taxon>Dikarya</taxon>
        <taxon>Ascomycota</taxon>
        <taxon>Pezizomycotina</taxon>
        <taxon>Sordariomycetes</taxon>
        <taxon>Hypocreomycetidae</taxon>
        <taxon>Hypocreales</taxon>
        <taxon>Hypocreales incertae sedis</taxon>
        <taxon>Acremonium</taxon>
    </lineage>
</organism>
<name>PYDC_ACRSP</name>
<protein>
    <recommendedName>
        <fullName evidence="4">Trans-enoyl reductase pydC</fullName>
        <ecNumber evidence="3">1.-.-.-</ecNumber>
    </recommendedName>
    <alternativeName>
        <fullName evidence="4">Pyrrocidines biosynthesis cluster protein C</fullName>
    </alternativeName>
</protein>
<keyword id="KW-0521">NADP</keyword>
<keyword id="KW-0547">Nucleotide-binding</keyword>
<keyword id="KW-0560">Oxidoreductase</keyword>
<keyword id="KW-0843">Virulence</keyword>
<dbReference type="EC" id="1.-.-.-" evidence="3"/>
<dbReference type="EMBL" id="MW690134">
    <property type="protein sequence ID" value="QXF14602.1"/>
    <property type="molecule type" value="Genomic_DNA"/>
</dbReference>
<dbReference type="SMR" id="A0A8F4S717"/>
<dbReference type="GO" id="GO:0000166">
    <property type="term" value="F:nucleotide binding"/>
    <property type="evidence" value="ECO:0007669"/>
    <property type="project" value="UniProtKB-KW"/>
</dbReference>
<dbReference type="GO" id="GO:0016651">
    <property type="term" value="F:oxidoreductase activity, acting on NAD(P)H"/>
    <property type="evidence" value="ECO:0007669"/>
    <property type="project" value="InterPro"/>
</dbReference>
<dbReference type="CDD" id="cd08249">
    <property type="entry name" value="enoyl_reductase_like"/>
    <property type="match status" value="1"/>
</dbReference>
<dbReference type="Gene3D" id="3.90.180.10">
    <property type="entry name" value="Medium-chain alcohol dehydrogenases, catalytic domain"/>
    <property type="match status" value="1"/>
</dbReference>
<dbReference type="Gene3D" id="3.40.50.720">
    <property type="entry name" value="NAD(P)-binding Rossmann-like Domain"/>
    <property type="match status" value="1"/>
</dbReference>
<dbReference type="InterPro" id="IPR013154">
    <property type="entry name" value="ADH-like_N"/>
</dbReference>
<dbReference type="InterPro" id="IPR011032">
    <property type="entry name" value="GroES-like_sf"/>
</dbReference>
<dbReference type="InterPro" id="IPR036291">
    <property type="entry name" value="NAD(P)-bd_dom_sf"/>
</dbReference>
<dbReference type="InterPro" id="IPR020843">
    <property type="entry name" value="PKS_ER"/>
</dbReference>
<dbReference type="InterPro" id="IPR047122">
    <property type="entry name" value="Trans-enoyl_RdTase-like"/>
</dbReference>
<dbReference type="PANTHER" id="PTHR45348">
    <property type="entry name" value="HYPOTHETICAL OXIDOREDUCTASE (EUROFUNG)"/>
    <property type="match status" value="1"/>
</dbReference>
<dbReference type="PANTHER" id="PTHR45348:SF1">
    <property type="entry name" value="TRANS-ENOYL REDUCTASE STHE"/>
    <property type="match status" value="1"/>
</dbReference>
<dbReference type="Pfam" id="PF08240">
    <property type="entry name" value="ADH_N"/>
    <property type="match status" value="1"/>
</dbReference>
<dbReference type="SMART" id="SM00829">
    <property type="entry name" value="PKS_ER"/>
    <property type="match status" value="1"/>
</dbReference>
<dbReference type="SUPFAM" id="SSF50129">
    <property type="entry name" value="GroES-like"/>
    <property type="match status" value="1"/>
</dbReference>
<dbReference type="SUPFAM" id="SSF51735">
    <property type="entry name" value="NAD(P)-binding Rossmann-fold domains"/>
    <property type="match status" value="1"/>
</dbReference>
<sequence length="354" mass="38959">MSPPALPSHHRAIVQANTDPVTFEISENRPVPVPLDDEILIKVSAVALNHCDYKMPGRVPCPGAVNGADYSGTVVRMGKKAELESGLRIGDHVAGAQVASSRRAPWAGAFAEYIRHHHSMVWKVPDGWSWEKAAAIGCATTSTVGMALWITLGLTGTPEEPAQEPEFVLVSGYRVVTTCSPKNFAMVESYGAEKAFDYHSSTCGEDIRAYTENRLQYVLDIITEARTIRQCYAAIGRGGGKYCGFELLPDDLLSTLRKSVKADWTMGLELTGNEVDLPGGYYRAANPEMHKWFVLWKQRYVALYDAGKLKPHPITVREGGLDKVIDGIETMRRREVSGEKIVYPLYNNSSKGVV</sequence>
<reference key="1">
    <citation type="journal article" date="2021" name="J. Am. Chem. Soc.">
        <title>Biosynthesis of para-cyclophane-containing hirsutellone family of fungal natural products.</title>
        <authorList>
            <person name="Ohashi M."/>
            <person name="Kakule T.B."/>
            <person name="Tang M.C."/>
            <person name="Jamieson C.S."/>
            <person name="Liu M."/>
            <person name="Zhao Y.L."/>
            <person name="Houk K.N."/>
            <person name="Tang Y."/>
        </authorList>
    </citation>
    <scope>NUCLEOTIDE SEQUENCE [GENOMIC DNA]</scope>
    <scope>FUNCTION</scope>
    <scope>CATALYTIC ACTIVITY</scope>
    <scope>PATHWAY</scope>
</reference>